<evidence type="ECO:0000269" key="1">
    <source>
    </source>
</evidence>
<evidence type="ECO:0000303" key="2">
    <source>
    </source>
</evidence>
<evidence type="ECO:0000305" key="3"/>
<evidence type="ECO:0000312" key="4">
    <source>
        <dbReference type="EMBL" id="AAD36305.1"/>
    </source>
</evidence>
<evidence type="ECO:0000312" key="5">
    <source>
        <dbReference type="EMBL" id="AGL50161.1"/>
    </source>
</evidence>
<evidence type="ECO:0000312" key="6">
    <source>
        <dbReference type="EMBL" id="AHD18863.1"/>
    </source>
</evidence>
<accession>Q9X0V7</accession>
<accession>G4FEB6</accession>
<keyword id="KW-0170">Cobalt</keyword>
<keyword id="KW-0328">Glycosyltransferase</keyword>
<keyword id="KW-0460">Magnesium</keyword>
<keyword id="KW-0464">Manganese</keyword>
<keyword id="KW-0533">Nickel</keyword>
<keyword id="KW-1185">Reference proteome</keyword>
<keyword id="KW-0808">Transferase</keyword>
<organism>
    <name type="scientific">Thermotoga maritima (strain ATCC 43589 / DSM 3109 / JCM 10099 / NBRC 100826 / MSB8)</name>
    <dbReference type="NCBI Taxonomy" id="243274"/>
    <lineage>
        <taxon>Bacteria</taxon>
        <taxon>Thermotogati</taxon>
        <taxon>Thermotogota</taxon>
        <taxon>Thermotogae</taxon>
        <taxon>Thermotogales</taxon>
        <taxon>Thermotogaceae</taxon>
        <taxon>Thermotoga</taxon>
    </lineage>
</organism>
<feature type="chain" id="PRO_0000431558" description="Mannosylglucosylglycerate synthase">
    <location>
        <begin position="1"/>
        <end position="427"/>
    </location>
</feature>
<protein>
    <recommendedName>
        <fullName evidence="2">Mannosylglucosylglycerate synthase</fullName>
        <ecNumber evidence="1">2.4.1.-</ecNumber>
    </recommendedName>
</protein>
<gene>
    <name evidence="2" type="primary">mggS</name>
    <name evidence="4" type="ordered locus">TM_1230</name>
    <name evidence="6" type="ORF">THEMA_08180</name>
    <name evidence="5" type="ORF">Tmari_1237</name>
</gene>
<reference key="1">
    <citation type="journal article" date="1999" name="Nature">
        <title>Evidence for lateral gene transfer between Archaea and Bacteria from genome sequence of Thermotoga maritima.</title>
        <authorList>
            <person name="Nelson K.E."/>
            <person name="Clayton R.A."/>
            <person name="Gill S.R."/>
            <person name="Gwinn M.L."/>
            <person name="Dodson R.J."/>
            <person name="Haft D.H."/>
            <person name="Hickey E.K."/>
            <person name="Peterson J.D."/>
            <person name="Nelson W.C."/>
            <person name="Ketchum K.A."/>
            <person name="McDonald L.A."/>
            <person name="Utterback T.R."/>
            <person name="Malek J.A."/>
            <person name="Linher K.D."/>
            <person name="Garrett M.M."/>
            <person name="Stewart A.M."/>
            <person name="Cotton M.D."/>
            <person name="Pratt M.S."/>
            <person name="Phillips C.A."/>
            <person name="Richardson D.L."/>
            <person name="Heidelberg J.F."/>
            <person name="Sutton G.G."/>
            <person name="Fleischmann R.D."/>
            <person name="Eisen J.A."/>
            <person name="White O."/>
            <person name="Salzberg S.L."/>
            <person name="Smith H.O."/>
            <person name="Venter J.C."/>
            <person name="Fraser C.M."/>
        </authorList>
    </citation>
    <scope>NUCLEOTIDE SEQUENCE [LARGE SCALE GENOMIC DNA]</scope>
    <source>
        <strain>ATCC 43589 / DSM 3109 / JCM 10099 / NBRC 100826 / MSB8</strain>
    </source>
</reference>
<reference key="2">
    <citation type="journal article" date="2013" name="PLoS Genet.">
        <title>The genome organization of Thermotoga maritima reflects its lifestyle.</title>
        <authorList>
            <person name="Latif H."/>
            <person name="Lerman J.A."/>
            <person name="Portnoy V.A."/>
            <person name="Tarasova Y."/>
            <person name="Nagarajan H."/>
            <person name="Schrimpe-Rutledge A.C."/>
            <person name="Smith R.D."/>
            <person name="Adkins J.N."/>
            <person name="Lee D.H."/>
            <person name="Qiu Y."/>
            <person name="Zengler K."/>
        </authorList>
    </citation>
    <scope>NUCLEOTIDE SEQUENCE [LARGE SCALE GENOMIC DNA]</scope>
    <source>
        <strain>ATCC 43589 / DSM 3109 / JCM 10099 / NBRC 100826 / MSB8</strain>
    </source>
</reference>
<reference key="3">
    <citation type="submission" date="2013-12" db="EMBL/GenBank/DDBJ databases">
        <authorList>
            <consortium name="DOE Joint Genome Institute"/>
            <person name="Noll K.M."/>
            <person name="Huntemann M."/>
            <person name="Han J."/>
            <person name="Chen A."/>
            <person name="Kyrpides N."/>
            <person name="Mavromatis K."/>
            <person name="Markowitz V."/>
            <person name="Palaniappan K."/>
            <person name="Ivanova N."/>
            <person name="Schaumberg A."/>
            <person name="Pati A."/>
            <person name="Liolios K."/>
            <person name="Nordberg H.P."/>
            <person name="Cantor M.N."/>
            <person name="Hua S.X."/>
            <person name="Woyke T."/>
        </authorList>
    </citation>
    <scope>NUCLEOTIDE SEQUENCE [LARGE SCALE GENOMIC DNA]</scope>
    <source>
        <strain>ATCC 43589 / DSM 3109 / JCM 10099 / NBRC 100826 / MSB8</strain>
    </source>
</reference>
<reference key="4">
    <citation type="journal article" date="2010" name="J. Bacteriol.">
        <title>Two alternative pathways for the synthesis of the rare compatible solute mannosylglucosylglycerate in Petrotoga mobilis.</title>
        <authorList>
            <person name="Fernandes C."/>
            <person name="Mendes V."/>
            <person name="Costa J."/>
            <person name="Empadinhas N."/>
            <person name="Jorge C."/>
            <person name="Lamosa P."/>
            <person name="Santos H."/>
            <person name="da Costa M.S."/>
        </authorList>
    </citation>
    <scope>FUNCTION</scope>
    <scope>CATALYTIC ACTIVITY</scope>
    <scope>COFACTOR</scope>
    <scope>BIOPHYSICOCHEMICAL PROPERTIES</scope>
    <source>
        <strain>ATCC 43589 / DSM 3109 / JCM 10099 / NBRC 100826 / MSB8</strain>
    </source>
</reference>
<dbReference type="EC" id="2.4.1.-" evidence="1"/>
<dbReference type="EMBL" id="AE000512">
    <property type="protein sequence ID" value="AAD36305.1"/>
    <property type="molecule type" value="Genomic_DNA"/>
</dbReference>
<dbReference type="EMBL" id="CP004077">
    <property type="protein sequence ID" value="AGL50161.1"/>
    <property type="molecule type" value="Genomic_DNA"/>
</dbReference>
<dbReference type="EMBL" id="CP007013">
    <property type="protein sequence ID" value="AHD18863.1"/>
    <property type="molecule type" value="Genomic_DNA"/>
</dbReference>
<dbReference type="PIR" id="G72278">
    <property type="entry name" value="G72278"/>
</dbReference>
<dbReference type="RefSeq" id="NP_229035.1">
    <property type="nucleotide sequence ID" value="NC_000853.1"/>
</dbReference>
<dbReference type="RefSeq" id="WP_004080052.1">
    <property type="nucleotide sequence ID" value="NC_000853.1"/>
</dbReference>
<dbReference type="SMR" id="Q9X0V7"/>
<dbReference type="STRING" id="243274.TM_1230"/>
<dbReference type="CAZy" id="GT4">
    <property type="family name" value="Glycosyltransferase Family 4"/>
</dbReference>
<dbReference type="PaxDb" id="243274-THEMA_08180"/>
<dbReference type="EnsemblBacteria" id="AAD36305">
    <property type="protein sequence ID" value="AAD36305"/>
    <property type="gene ID" value="TM_1230"/>
</dbReference>
<dbReference type="KEGG" id="tma:TM1230"/>
<dbReference type="KEGG" id="tmi:THEMA_08180"/>
<dbReference type="KEGG" id="tmm:Tmari_1237"/>
<dbReference type="KEGG" id="tmw:THMA_1256"/>
<dbReference type="PATRIC" id="fig|243274.17.peg.1235"/>
<dbReference type="eggNOG" id="COG0438">
    <property type="taxonomic scope" value="Bacteria"/>
</dbReference>
<dbReference type="InParanoid" id="Q9X0V7"/>
<dbReference type="OrthoDB" id="9762705at2"/>
<dbReference type="BioCyc" id="MetaCyc:MONOMER-16144"/>
<dbReference type="Proteomes" id="UP000008183">
    <property type="component" value="Chromosome"/>
</dbReference>
<dbReference type="GO" id="GO:0016757">
    <property type="term" value="F:glycosyltransferase activity"/>
    <property type="evidence" value="ECO:0007669"/>
    <property type="project" value="UniProtKB-KW"/>
</dbReference>
<dbReference type="CDD" id="cd03801">
    <property type="entry name" value="GT4_PimA-like"/>
    <property type="match status" value="1"/>
</dbReference>
<dbReference type="Gene3D" id="3.40.50.2000">
    <property type="entry name" value="Glycogen Phosphorylase B"/>
    <property type="match status" value="2"/>
</dbReference>
<dbReference type="InterPro" id="IPR001296">
    <property type="entry name" value="Glyco_trans_1"/>
</dbReference>
<dbReference type="InterPro" id="IPR054975">
    <property type="entry name" value="manno_glu_gly_synth"/>
</dbReference>
<dbReference type="NCBIfam" id="NF041101">
    <property type="entry name" value="manno_glu_gly_synth"/>
    <property type="match status" value="1"/>
</dbReference>
<dbReference type="PANTHER" id="PTHR12526">
    <property type="entry name" value="GLYCOSYLTRANSFERASE"/>
    <property type="match status" value="1"/>
</dbReference>
<dbReference type="PANTHER" id="PTHR12526:SF628">
    <property type="entry name" value="MANNOSYLGLUCOSYLGLYCERATE SYNTHASE"/>
    <property type="match status" value="1"/>
</dbReference>
<dbReference type="Pfam" id="PF00534">
    <property type="entry name" value="Glycos_transf_1"/>
    <property type="match status" value="1"/>
</dbReference>
<dbReference type="SUPFAM" id="SSF53756">
    <property type="entry name" value="UDP-Glycosyltransferase/glycogen phosphorylase"/>
    <property type="match status" value="1"/>
</dbReference>
<name>MGGS_THEMA</name>
<sequence length="427" mass="49702">MKIALIHYRGGLMDGVSLEMEKWKKVLTKMGHEVHIVAENKKEGVDLTLKEIGFENPDFERVNRNFFGGIKDFLSEKEFLDFLKEKEEELFHILNEALKDYDLIVPNNIWSLGLFPSLGLALSRLEKNFVAHHHDFWWERKHLIPENRRFREILDKHFPPDLPNVKHVVINTIAQRELKRRRNIDSVVVPNVMDFSSPITSEEMYHRVREELQIAPGTIVALQATRIDRRKTIELSIDVVSLLKETLTSKKEADLYNGERYSGEVILLFSGICEDEEYLKELKEYASSKGVSLLVLSEEVRKNTSLFWKLYNAADFVTYPSILEGWGNQLLEAIAAKKPVVLFEYEVFKSDIKPAGLKYVSLGDRCFRENGLVKVDERILKKAVEEISRLLFDPSLYRETVEHNFEVGKRHFSLERLEDILSREVLP</sequence>
<proteinExistence type="evidence at protein level"/>
<comment type="function">
    <text evidence="1">Catalyzes the synthesis of mannosylglucosylglycerate (MGG) from glucosylglycerate (GG) and GDP-mannose.</text>
</comment>
<comment type="catalytic activity">
    <reaction evidence="1">
        <text>(2R)-2-O-(alpha-D-glucopyranosyl)-glycerate + GDP-alpha-D-mannose = (2R)-2-O-[alpha-D-mannopyranosyl-(1-&gt;2)-alpha-D-glucopyranosyl]-glycerate + GDP + H(+)</text>
        <dbReference type="Rhea" id="RHEA:47728"/>
        <dbReference type="ChEBI" id="CHEBI:15378"/>
        <dbReference type="ChEBI" id="CHEBI:57527"/>
        <dbReference type="ChEBI" id="CHEBI:58189"/>
        <dbReference type="ChEBI" id="CHEBI:62510"/>
        <dbReference type="ChEBI" id="CHEBI:87836"/>
    </reaction>
</comment>
<comment type="cofactor">
    <cofactor evidence="1">
        <name>Co(2+)</name>
        <dbReference type="ChEBI" id="CHEBI:48828"/>
    </cofactor>
    <cofactor evidence="1">
        <name>Mg(2+)</name>
        <dbReference type="ChEBI" id="CHEBI:18420"/>
    </cofactor>
    <cofactor evidence="1">
        <name>Mn(2+)</name>
        <dbReference type="ChEBI" id="CHEBI:29035"/>
    </cofactor>
    <cofactor evidence="1">
        <name>Ni(2+)</name>
        <dbReference type="ChEBI" id="CHEBI:49786"/>
    </cofactor>
</comment>
<comment type="biophysicochemical properties">
    <phDependence>
        <text evidence="1">Optimum pH is 7.0.</text>
    </phDependence>
    <temperatureDependence>
        <text evidence="1">Optimum temperature is 60 degrees Celsius.</text>
    </temperatureDependence>
</comment>
<comment type="similarity">
    <text evidence="3">Belongs to the glycosyltransferase group 1 family.</text>
</comment>